<comment type="function">
    <text evidence="1">Catalyzes the hydrolysis of N-formyl-L-kynurenine to L-kynurenine, the second step in the kynurenine pathway of tryptophan degradation. Kynurenine may be further oxidized to nicotinic acid, NAD(H) and NADP(H). Required for elimination of toxic metabolites.</text>
</comment>
<comment type="catalytic activity">
    <reaction evidence="1">
        <text>N-formyl-L-kynurenine + H2O = L-kynurenine + formate + H(+)</text>
        <dbReference type="Rhea" id="RHEA:13009"/>
        <dbReference type="ChEBI" id="CHEBI:15377"/>
        <dbReference type="ChEBI" id="CHEBI:15378"/>
        <dbReference type="ChEBI" id="CHEBI:15740"/>
        <dbReference type="ChEBI" id="CHEBI:57959"/>
        <dbReference type="ChEBI" id="CHEBI:58629"/>
        <dbReference type="EC" id="3.5.1.9"/>
    </reaction>
</comment>
<comment type="pathway">
    <text evidence="1">Amino-acid degradation; L-tryptophan degradation via kynurenine pathway; L-kynurenine from L-tryptophan: step 2/2.</text>
</comment>
<comment type="subunit">
    <text evidence="1">Homodimer.</text>
</comment>
<comment type="domain">
    <text evidence="1">The main chain amide nitrogen atoms of the second glycine and its adjacent residue in the HGGXW motif define the oxyanion hole, and stabilize the oxyanion that forms during the nucleophilic attack by the catalytic serine during substrate cleavage.</text>
</comment>
<comment type="similarity">
    <text evidence="1">Belongs to the kynurenine formamidase family.</text>
</comment>
<proteinExistence type="inferred from homology"/>
<gene>
    <name evidence="1" type="primary">BNA7</name>
    <name type="ordered locus">DEHA2D04422g</name>
</gene>
<protein>
    <recommendedName>
        <fullName evidence="1">Kynurenine formamidase</fullName>
        <shortName evidence="1">KFA</shortName>
        <shortName evidence="1">KFase</shortName>
        <ecNumber evidence="1">3.5.1.9</ecNumber>
    </recommendedName>
    <alternativeName>
        <fullName evidence="1">Arylformamidase</fullName>
    </alternativeName>
    <alternativeName>
        <fullName evidence="1">N-formylkynurenine formamidase</fullName>
        <shortName evidence="1">FKF</shortName>
    </alternativeName>
</protein>
<sequence length="291" mass="33536">MDDGIVSYGEHPLNRLKFFQFDKSNDVTLLLIHGGAWRDPNNTYNDFKDMISHIQKNQYAAKYNLIAMNYRLSPEVKHPFHLWDVLEGLQFLVQNYDIHKISIAGHSVGATLMLQLLDYNKILDTGFQILVEDSKADKNRTETDLHVPSKKERILMNEAMEKLQLRTFCFIDGIYDITQLISEYGCPYESFVNNAFSSPEQYAEATQLSSSTVDVGSPFSYNTHSANVRNELNLVILQSNKDELLSMRQTNLFIEYLTQKNLNFKPFVGEWGGHEHVYRHEDVANIVLDSI</sequence>
<name>KFA_DEBHA</name>
<dbReference type="EC" id="3.5.1.9" evidence="1"/>
<dbReference type="EMBL" id="CR382136">
    <property type="protein sequence ID" value="CAG86798.2"/>
    <property type="molecule type" value="Genomic_DNA"/>
</dbReference>
<dbReference type="RefSeq" id="XP_458659.2">
    <property type="nucleotide sequence ID" value="XM_458659.1"/>
</dbReference>
<dbReference type="SMR" id="Q6BT11"/>
<dbReference type="FunCoup" id="Q6BT11">
    <property type="interactions" value="141"/>
</dbReference>
<dbReference type="STRING" id="284592.Q6BT11"/>
<dbReference type="ESTHER" id="debha-bna7">
    <property type="family name" value="Kynurenine-formamidase"/>
</dbReference>
<dbReference type="GeneID" id="2901179"/>
<dbReference type="KEGG" id="dha:DEHA2D04422g"/>
<dbReference type="VEuPathDB" id="FungiDB:DEHA2D04422g"/>
<dbReference type="eggNOG" id="ENOG502S28Q">
    <property type="taxonomic scope" value="Eukaryota"/>
</dbReference>
<dbReference type="HOGENOM" id="CLU_016852_1_0_1"/>
<dbReference type="InParanoid" id="Q6BT11"/>
<dbReference type="OMA" id="DHYDIMK"/>
<dbReference type="OrthoDB" id="420264at2759"/>
<dbReference type="UniPathway" id="UPA00333">
    <property type="reaction ID" value="UER00454"/>
</dbReference>
<dbReference type="Proteomes" id="UP000000599">
    <property type="component" value="Chromosome D"/>
</dbReference>
<dbReference type="GO" id="GO:0004061">
    <property type="term" value="F:arylformamidase activity"/>
    <property type="evidence" value="ECO:0007669"/>
    <property type="project" value="UniProtKB-UniRule"/>
</dbReference>
<dbReference type="GO" id="GO:0034354">
    <property type="term" value="P:'de novo' NAD biosynthetic process from L-tryptophan"/>
    <property type="evidence" value="ECO:0007669"/>
    <property type="project" value="UniProtKB-UniRule"/>
</dbReference>
<dbReference type="GO" id="GO:0019441">
    <property type="term" value="P:L-tryptophan catabolic process to kynurenine"/>
    <property type="evidence" value="ECO:0007669"/>
    <property type="project" value="UniProtKB-UniRule"/>
</dbReference>
<dbReference type="Gene3D" id="3.40.50.1820">
    <property type="entry name" value="alpha/beta hydrolase"/>
    <property type="match status" value="1"/>
</dbReference>
<dbReference type="HAMAP" id="MF_03014">
    <property type="entry name" value="KFase"/>
    <property type="match status" value="1"/>
</dbReference>
<dbReference type="InterPro" id="IPR029058">
    <property type="entry name" value="AB_hydrolase_fold"/>
</dbReference>
<dbReference type="InterPro" id="IPR049492">
    <property type="entry name" value="BD-FAE-like_dom"/>
</dbReference>
<dbReference type="InterPro" id="IPR050300">
    <property type="entry name" value="GDXG_lipolytic_enzyme"/>
</dbReference>
<dbReference type="InterPro" id="IPR027519">
    <property type="entry name" value="KFase_ver/fungi-typ"/>
</dbReference>
<dbReference type="PANTHER" id="PTHR48081">
    <property type="entry name" value="AB HYDROLASE SUPERFAMILY PROTEIN C4A8.06C"/>
    <property type="match status" value="1"/>
</dbReference>
<dbReference type="PANTHER" id="PTHR48081:SF33">
    <property type="entry name" value="KYNURENINE FORMAMIDASE"/>
    <property type="match status" value="1"/>
</dbReference>
<dbReference type="Pfam" id="PF20434">
    <property type="entry name" value="BD-FAE"/>
    <property type="match status" value="1"/>
</dbReference>
<dbReference type="SUPFAM" id="SSF53474">
    <property type="entry name" value="alpha/beta-Hydrolases"/>
    <property type="match status" value="1"/>
</dbReference>
<accession>Q6BT11</accession>
<reference key="1">
    <citation type="journal article" date="2004" name="Nature">
        <title>Genome evolution in yeasts.</title>
        <authorList>
            <person name="Dujon B."/>
            <person name="Sherman D."/>
            <person name="Fischer G."/>
            <person name="Durrens P."/>
            <person name="Casaregola S."/>
            <person name="Lafontaine I."/>
            <person name="de Montigny J."/>
            <person name="Marck C."/>
            <person name="Neuveglise C."/>
            <person name="Talla E."/>
            <person name="Goffard N."/>
            <person name="Frangeul L."/>
            <person name="Aigle M."/>
            <person name="Anthouard V."/>
            <person name="Babour A."/>
            <person name="Barbe V."/>
            <person name="Barnay S."/>
            <person name="Blanchin S."/>
            <person name="Beckerich J.-M."/>
            <person name="Beyne E."/>
            <person name="Bleykasten C."/>
            <person name="Boisrame A."/>
            <person name="Boyer J."/>
            <person name="Cattolico L."/>
            <person name="Confanioleri F."/>
            <person name="de Daruvar A."/>
            <person name="Despons L."/>
            <person name="Fabre E."/>
            <person name="Fairhead C."/>
            <person name="Ferry-Dumazet H."/>
            <person name="Groppi A."/>
            <person name="Hantraye F."/>
            <person name="Hennequin C."/>
            <person name="Jauniaux N."/>
            <person name="Joyet P."/>
            <person name="Kachouri R."/>
            <person name="Kerrest A."/>
            <person name="Koszul R."/>
            <person name="Lemaire M."/>
            <person name="Lesur I."/>
            <person name="Ma L."/>
            <person name="Muller H."/>
            <person name="Nicaud J.-M."/>
            <person name="Nikolski M."/>
            <person name="Oztas S."/>
            <person name="Ozier-Kalogeropoulos O."/>
            <person name="Pellenz S."/>
            <person name="Potier S."/>
            <person name="Richard G.-F."/>
            <person name="Straub M.-L."/>
            <person name="Suleau A."/>
            <person name="Swennen D."/>
            <person name="Tekaia F."/>
            <person name="Wesolowski-Louvel M."/>
            <person name="Westhof E."/>
            <person name="Wirth B."/>
            <person name="Zeniou-Meyer M."/>
            <person name="Zivanovic Y."/>
            <person name="Bolotin-Fukuhara M."/>
            <person name="Thierry A."/>
            <person name="Bouchier C."/>
            <person name="Caudron B."/>
            <person name="Scarpelli C."/>
            <person name="Gaillardin C."/>
            <person name="Weissenbach J."/>
            <person name="Wincker P."/>
            <person name="Souciet J.-L."/>
        </authorList>
    </citation>
    <scope>NUCLEOTIDE SEQUENCE [LARGE SCALE GENOMIC DNA]</scope>
    <source>
        <strain>ATCC 36239 / CBS 767 / BCRC 21394 / JCM 1990 / NBRC 0083 / IGC 2968</strain>
    </source>
</reference>
<organism>
    <name type="scientific">Debaryomyces hansenii (strain ATCC 36239 / CBS 767 / BCRC 21394 / JCM 1990 / NBRC 0083 / IGC 2968)</name>
    <name type="common">Yeast</name>
    <name type="synonym">Torulaspora hansenii</name>
    <dbReference type="NCBI Taxonomy" id="284592"/>
    <lineage>
        <taxon>Eukaryota</taxon>
        <taxon>Fungi</taxon>
        <taxon>Dikarya</taxon>
        <taxon>Ascomycota</taxon>
        <taxon>Saccharomycotina</taxon>
        <taxon>Pichiomycetes</taxon>
        <taxon>Debaryomycetaceae</taxon>
        <taxon>Debaryomyces</taxon>
    </lineage>
</organism>
<feature type="chain" id="PRO_0000361882" description="Kynurenine formamidase">
    <location>
        <begin position="1"/>
        <end position="291"/>
    </location>
</feature>
<feature type="short sequence motif" description="HGGXW">
    <location>
        <begin position="33"/>
        <end position="37"/>
    </location>
</feature>
<feature type="active site" description="Nucleophile" evidence="1">
    <location>
        <position position="107"/>
    </location>
</feature>
<feature type="active site" evidence="1">
    <location>
        <position position="242"/>
    </location>
</feature>
<feature type="active site" evidence="1">
    <location>
        <position position="280"/>
    </location>
</feature>
<evidence type="ECO:0000255" key="1">
    <source>
        <dbReference type="HAMAP-Rule" id="MF_03014"/>
    </source>
</evidence>
<keyword id="KW-0378">Hydrolase</keyword>
<keyword id="KW-1185">Reference proteome</keyword>
<keyword id="KW-0823">Tryptophan catabolism</keyword>